<accession>Q1LR89</accession>
<feature type="chain" id="PRO_0000284286" description="Endoribonuclease YbeY">
    <location>
        <begin position="1"/>
        <end position="197"/>
    </location>
</feature>
<feature type="binding site" evidence="1">
    <location>
        <position position="156"/>
    </location>
    <ligand>
        <name>Zn(2+)</name>
        <dbReference type="ChEBI" id="CHEBI:29105"/>
        <note>catalytic</note>
    </ligand>
</feature>
<feature type="binding site" evidence="1">
    <location>
        <position position="160"/>
    </location>
    <ligand>
        <name>Zn(2+)</name>
        <dbReference type="ChEBI" id="CHEBI:29105"/>
        <note>catalytic</note>
    </ligand>
</feature>
<feature type="binding site" evidence="1">
    <location>
        <position position="166"/>
    </location>
    <ligand>
        <name>Zn(2+)</name>
        <dbReference type="ChEBI" id="CHEBI:29105"/>
        <note>catalytic</note>
    </ligand>
</feature>
<protein>
    <recommendedName>
        <fullName evidence="1">Endoribonuclease YbeY</fullName>
        <ecNumber evidence="1">3.1.-.-</ecNumber>
    </recommendedName>
</protein>
<comment type="function">
    <text evidence="1">Single strand-specific metallo-endoribonuclease involved in late-stage 70S ribosome quality control and in maturation of the 3' terminus of the 16S rRNA.</text>
</comment>
<comment type="cofactor">
    <cofactor evidence="1">
        <name>Zn(2+)</name>
        <dbReference type="ChEBI" id="CHEBI:29105"/>
    </cofactor>
    <text evidence="1">Binds 1 zinc ion.</text>
</comment>
<comment type="subcellular location">
    <subcellularLocation>
        <location evidence="1">Cytoplasm</location>
    </subcellularLocation>
</comment>
<comment type="similarity">
    <text evidence="1">Belongs to the endoribonuclease YbeY family.</text>
</comment>
<comment type="sequence caution" evidence="2">
    <conflict type="erroneous initiation">
        <sequence resource="EMBL-CDS" id="ABF07337"/>
    </conflict>
</comment>
<proteinExistence type="inferred from homology"/>
<evidence type="ECO:0000255" key="1">
    <source>
        <dbReference type="HAMAP-Rule" id="MF_00009"/>
    </source>
</evidence>
<evidence type="ECO:0000305" key="2"/>
<dbReference type="EC" id="3.1.-.-" evidence="1"/>
<dbReference type="EMBL" id="CP000352">
    <property type="protein sequence ID" value="ABF07337.1"/>
    <property type="status" value="ALT_INIT"/>
    <property type="molecule type" value="Genomic_DNA"/>
</dbReference>
<dbReference type="RefSeq" id="WP_011515325.1">
    <property type="nucleotide sequence ID" value="NC_007973.1"/>
</dbReference>
<dbReference type="SMR" id="Q1LR89"/>
<dbReference type="STRING" id="266264.Rmet_0451"/>
<dbReference type="KEGG" id="rme:Rmet_0451"/>
<dbReference type="eggNOG" id="COG0319">
    <property type="taxonomic scope" value="Bacteria"/>
</dbReference>
<dbReference type="HOGENOM" id="CLU_1118710_0_0_4"/>
<dbReference type="Proteomes" id="UP000002429">
    <property type="component" value="Chromosome"/>
</dbReference>
<dbReference type="GO" id="GO:0005737">
    <property type="term" value="C:cytoplasm"/>
    <property type="evidence" value="ECO:0007669"/>
    <property type="project" value="UniProtKB-SubCell"/>
</dbReference>
<dbReference type="GO" id="GO:0004222">
    <property type="term" value="F:metalloendopeptidase activity"/>
    <property type="evidence" value="ECO:0007669"/>
    <property type="project" value="InterPro"/>
</dbReference>
<dbReference type="GO" id="GO:0004521">
    <property type="term" value="F:RNA endonuclease activity"/>
    <property type="evidence" value="ECO:0007669"/>
    <property type="project" value="UniProtKB-UniRule"/>
</dbReference>
<dbReference type="GO" id="GO:0008270">
    <property type="term" value="F:zinc ion binding"/>
    <property type="evidence" value="ECO:0007669"/>
    <property type="project" value="UniProtKB-UniRule"/>
</dbReference>
<dbReference type="GO" id="GO:0006364">
    <property type="term" value="P:rRNA processing"/>
    <property type="evidence" value="ECO:0007669"/>
    <property type="project" value="UniProtKB-UniRule"/>
</dbReference>
<dbReference type="Gene3D" id="3.40.390.30">
    <property type="entry name" value="Metalloproteases ('zincins'), catalytic domain"/>
    <property type="match status" value="1"/>
</dbReference>
<dbReference type="HAMAP" id="MF_00009">
    <property type="entry name" value="Endoribonucl_YbeY"/>
    <property type="match status" value="1"/>
</dbReference>
<dbReference type="InterPro" id="IPR023091">
    <property type="entry name" value="MetalPrtase_cat_dom_sf_prd"/>
</dbReference>
<dbReference type="InterPro" id="IPR002036">
    <property type="entry name" value="YbeY"/>
</dbReference>
<dbReference type="InterPro" id="IPR020549">
    <property type="entry name" value="YbeY_CS"/>
</dbReference>
<dbReference type="NCBIfam" id="NF010570">
    <property type="entry name" value="PRK13963.1"/>
    <property type="match status" value="1"/>
</dbReference>
<dbReference type="NCBIfam" id="TIGR00043">
    <property type="entry name" value="rRNA maturation RNase YbeY"/>
    <property type="match status" value="1"/>
</dbReference>
<dbReference type="PANTHER" id="PTHR46986">
    <property type="entry name" value="ENDORIBONUCLEASE YBEY, CHLOROPLASTIC"/>
    <property type="match status" value="1"/>
</dbReference>
<dbReference type="PANTHER" id="PTHR46986:SF1">
    <property type="entry name" value="ENDORIBONUCLEASE YBEY, CHLOROPLASTIC"/>
    <property type="match status" value="1"/>
</dbReference>
<dbReference type="Pfam" id="PF02130">
    <property type="entry name" value="YbeY"/>
    <property type="match status" value="1"/>
</dbReference>
<dbReference type="SUPFAM" id="SSF55486">
    <property type="entry name" value="Metalloproteases ('zincins'), catalytic domain"/>
    <property type="match status" value="1"/>
</dbReference>
<dbReference type="PROSITE" id="PS01306">
    <property type="entry name" value="UPF0054"/>
    <property type="match status" value="1"/>
</dbReference>
<reference key="1">
    <citation type="journal article" date="2010" name="PLoS ONE">
        <title>The complete genome sequence of Cupriavidus metallidurans strain CH34, a master survivalist in harsh and anthropogenic environments.</title>
        <authorList>
            <person name="Janssen P.J."/>
            <person name="Van Houdt R."/>
            <person name="Moors H."/>
            <person name="Monsieurs P."/>
            <person name="Morin N."/>
            <person name="Michaux A."/>
            <person name="Benotmane M.A."/>
            <person name="Leys N."/>
            <person name="Vallaeys T."/>
            <person name="Lapidus A."/>
            <person name="Monchy S."/>
            <person name="Medigue C."/>
            <person name="Taghavi S."/>
            <person name="McCorkle S."/>
            <person name="Dunn J."/>
            <person name="van der Lelie D."/>
            <person name="Mergeay M."/>
        </authorList>
    </citation>
    <scope>NUCLEOTIDE SEQUENCE [LARGE SCALE GENOMIC DNA]</scope>
    <source>
        <strain>ATCC 43123 / DSM 2839 / NBRC 102507 / CH34</strain>
    </source>
</reference>
<name>YBEY_CUPMC</name>
<sequence>MVALLAEHTDTRQQAGLLVRPDNSDALSVAVTATPIVTTTGTPATPPALELDVQHGDGVSKRNGLPSRKQIEKWVKSALYADAALTVRFVDETEGRTLNRSYRGKDYATNVLTFAYAENDDDPVAGDIVLCCPVVESEAKAQKKSLEAHYAHLIVHGVLHAQGYEHDDDTEAEEMEAIETETLQALGFEDPYKPIRE</sequence>
<keyword id="KW-0963">Cytoplasm</keyword>
<keyword id="KW-0255">Endonuclease</keyword>
<keyword id="KW-0378">Hydrolase</keyword>
<keyword id="KW-0479">Metal-binding</keyword>
<keyword id="KW-0540">Nuclease</keyword>
<keyword id="KW-1185">Reference proteome</keyword>
<keyword id="KW-0690">Ribosome biogenesis</keyword>
<keyword id="KW-0698">rRNA processing</keyword>
<keyword id="KW-0862">Zinc</keyword>
<gene>
    <name evidence="1" type="primary">ybeY</name>
    <name type="ordered locus">Rmet_0451</name>
</gene>
<organism>
    <name type="scientific">Cupriavidus metallidurans (strain ATCC 43123 / DSM 2839 / NBRC 102507 / CH34)</name>
    <name type="common">Ralstonia metallidurans</name>
    <dbReference type="NCBI Taxonomy" id="266264"/>
    <lineage>
        <taxon>Bacteria</taxon>
        <taxon>Pseudomonadati</taxon>
        <taxon>Pseudomonadota</taxon>
        <taxon>Betaproteobacteria</taxon>
        <taxon>Burkholderiales</taxon>
        <taxon>Burkholderiaceae</taxon>
        <taxon>Cupriavidus</taxon>
    </lineage>
</organism>